<accession>B9KKM8</accession>
<sequence>MTHVEIRHAMDPVSARQLDTAGLREAFHMGDLFRSGEIRLVYTHYDRMIVGGAVPAGEPLVLDEVKPTGTASILDRREMGVVNVGAAGTVSAGGESWEMGRGDVLYLPMGAGPVTFAGEGRFYILSAPAHTAHPARLVKLEDAKKVKLGSPETANERTINQFIHPEVMQSCQLVVGYTQFHGGSVWNTMPAHVHDRRMEAYLYFDLAEEARVFHFMGEPSETRHLVMRNEEAVVSPPWSIHCGCGTGSYTFVWAMAGDNVDYRDVEMVAMEDLR</sequence>
<proteinExistence type="inferred from homology"/>
<gene>
    <name evidence="1" type="primary">kduI</name>
    <name type="ordered locus">RSKD131_1815</name>
</gene>
<organism>
    <name type="scientific">Cereibacter sphaeroides (strain KD131 / KCTC 12085)</name>
    <name type="common">Rhodobacter sphaeroides</name>
    <dbReference type="NCBI Taxonomy" id="557760"/>
    <lineage>
        <taxon>Bacteria</taxon>
        <taxon>Pseudomonadati</taxon>
        <taxon>Pseudomonadota</taxon>
        <taxon>Alphaproteobacteria</taxon>
        <taxon>Rhodobacterales</taxon>
        <taxon>Paracoccaceae</taxon>
        <taxon>Cereibacter</taxon>
    </lineage>
</organism>
<dbReference type="EC" id="5.3.1.17" evidence="1"/>
<dbReference type="EMBL" id="CP001150">
    <property type="protein sequence ID" value="ACM01675.1"/>
    <property type="molecule type" value="Genomic_DNA"/>
</dbReference>
<dbReference type="RefSeq" id="WP_002720646.1">
    <property type="nucleotide sequence ID" value="NC_011963.1"/>
</dbReference>
<dbReference type="SMR" id="B9KKM8"/>
<dbReference type="GeneID" id="67447214"/>
<dbReference type="KEGG" id="rsk:RSKD131_1815"/>
<dbReference type="HOGENOM" id="CLU_062609_0_0_5"/>
<dbReference type="UniPathway" id="UPA00545">
    <property type="reaction ID" value="UER00826"/>
</dbReference>
<dbReference type="GO" id="GO:0008697">
    <property type="term" value="F:4-deoxy-L-threo-5-hexosulose-uronate ketol-isomerase activity"/>
    <property type="evidence" value="ECO:0007669"/>
    <property type="project" value="UniProtKB-UniRule"/>
</dbReference>
<dbReference type="GO" id="GO:0008270">
    <property type="term" value="F:zinc ion binding"/>
    <property type="evidence" value="ECO:0007669"/>
    <property type="project" value="UniProtKB-UniRule"/>
</dbReference>
<dbReference type="GO" id="GO:0019698">
    <property type="term" value="P:D-galacturonate catabolic process"/>
    <property type="evidence" value="ECO:0007669"/>
    <property type="project" value="TreeGrafter"/>
</dbReference>
<dbReference type="GO" id="GO:0042840">
    <property type="term" value="P:D-glucuronate catabolic process"/>
    <property type="evidence" value="ECO:0007669"/>
    <property type="project" value="TreeGrafter"/>
</dbReference>
<dbReference type="GO" id="GO:0045490">
    <property type="term" value="P:pectin catabolic process"/>
    <property type="evidence" value="ECO:0007669"/>
    <property type="project" value="UniProtKB-UniRule"/>
</dbReference>
<dbReference type="CDD" id="cd20491">
    <property type="entry name" value="cupin_KduI_C"/>
    <property type="match status" value="1"/>
</dbReference>
<dbReference type="CDD" id="cd20294">
    <property type="entry name" value="cupin_KduI_N"/>
    <property type="match status" value="1"/>
</dbReference>
<dbReference type="Gene3D" id="2.60.120.10">
    <property type="entry name" value="Jelly Rolls"/>
    <property type="match status" value="1"/>
</dbReference>
<dbReference type="Gene3D" id="2.60.120.520">
    <property type="entry name" value="pectin degrading enzyme 5-keto 4- deoxyuronate isomerase, domain 1"/>
    <property type="match status" value="1"/>
</dbReference>
<dbReference type="HAMAP" id="MF_00687">
    <property type="entry name" value="KduI"/>
    <property type="match status" value="1"/>
</dbReference>
<dbReference type="InterPro" id="IPR007045">
    <property type="entry name" value="KduI"/>
</dbReference>
<dbReference type="InterPro" id="IPR021120">
    <property type="entry name" value="KduI/IolB_isomerase"/>
</dbReference>
<dbReference type="InterPro" id="IPR027449">
    <property type="entry name" value="KduI_N"/>
</dbReference>
<dbReference type="InterPro" id="IPR014710">
    <property type="entry name" value="RmlC-like_jellyroll"/>
</dbReference>
<dbReference type="InterPro" id="IPR011051">
    <property type="entry name" value="RmlC_Cupin_sf"/>
</dbReference>
<dbReference type="NCBIfam" id="NF002091">
    <property type="entry name" value="PRK00924.1"/>
    <property type="match status" value="1"/>
</dbReference>
<dbReference type="PANTHER" id="PTHR38461">
    <property type="entry name" value="4-DEOXY-L-THREO-5-HEXOSULOSE-URONATE KETOL-ISOMERASE"/>
    <property type="match status" value="1"/>
</dbReference>
<dbReference type="PANTHER" id="PTHR38461:SF1">
    <property type="entry name" value="4-DEOXY-L-THREO-5-HEXOSULOSE-URONATE KETOL-ISOMERASE"/>
    <property type="match status" value="1"/>
</dbReference>
<dbReference type="Pfam" id="PF04962">
    <property type="entry name" value="KduI"/>
    <property type="match status" value="1"/>
</dbReference>
<dbReference type="PIRSF" id="PIRSF006625">
    <property type="entry name" value="KduI"/>
    <property type="match status" value="1"/>
</dbReference>
<dbReference type="SUPFAM" id="SSF51182">
    <property type="entry name" value="RmlC-like cupins"/>
    <property type="match status" value="1"/>
</dbReference>
<evidence type="ECO:0000255" key="1">
    <source>
        <dbReference type="HAMAP-Rule" id="MF_00687"/>
    </source>
</evidence>
<feature type="chain" id="PRO_1000147781" description="4-deoxy-L-threo-5-hexosulose-uronate ketol-isomerase">
    <location>
        <begin position="1"/>
        <end position="274"/>
    </location>
</feature>
<feature type="binding site" evidence="1">
    <location>
        <position position="192"/>
    </location>
    <ligand>
        <name>Zn(2+)</name>
        <dbReference type="ChEBI" id="CHEBI:29105"/>
    </ligand>
</feature>
<feature type="binding site" evidence="1">
    <location>
        <position position="194"/>
    </location>
    <ligand>
        <name>Zn(2+)</name>
        <dbReference type="ChEBI" id="CHEBI:29105"/>
    </ligand>
</feature>
<feature type="binding site" evidence="1">
    <location>
        <position position="199"/>
    </location>
    <ligand>
        <name>Zn(2+)</name>
        <dbReference type="ChEBI" id="CHEBI:29105"/>
    </ligand>
</feature>
<feature type="binding site" evidence="1">
    <location>
        <position position="241"/>
    </location>
    <ligand>
        <name>Zn(2+)</name>
        <dbReference type="ChEBI" id="CHEBI:29105"/>
    </ligand>
</feature>
<protein>
    <recommendedName>
        <fullName evidence="1">4-deoxy-L-threo-5-hexosulose-uronate ketol-isomerase</fullName>
        <ecNumber evidence="1">5.3.1.17</ecNumber>
    </recommendedName>
    <alternativeName>
        <fullName evidence="1">5-keto-4-deoxyuronate isomerase</fullName>
    </alternativeName>
    <alternativeName>
        <fullName evidence="1">DKI isomerase</fullName>
    </alternativeName>
</protein>
<reference key="1">
    <citation type="journal article" date="2009" name="J. Bacteriol.">
        <title>Complete genome sequence of Rhodobacter sphaeroides KD131.</title>
        <authorList>
            <person name="Lim S.-K."/>
            <person name="Kim S.J."/>
            <person name="Cha S.H."/>
            <person name="Oh Y.-K."/>
            <person name="Rhee H.-J."/>
            <person name="Kim M.-S."/>
            <person name="Lee J.K."/>
        </authorList>
    </citation>
    <scope>NUCLEOTIDE SEQUENCE [LARGE SCALE GENOMIC DNA]</scope>
    <source>
        <strain>KD131 / KCTC 12085</strain>
    </source>
</reference>
<name>KDUI_CERSK</name>
<comment type="function">
    <text evidence="1">Catalyzes the isomerization of 5-dehydro-4-deoxy-D-glucuronate to 3-deoxy-D-glycero-2,5-hexodiulosonate.</text>
</comment>
<comment type="catalytic activity">
    <reaction evidence="1">
        <text>5-dehydro-4-deoxy-D-glucuronate = 3-deoxy-D-glycero-2,5-hexodiulosonate</text>
        <dbReference type="Rhea" id="RHEA:23896"/>
        <dbReference type="ChEBI" id="CHEBI:17117"/>
        <dbReference type="ChEBI" id="CHEBI:29071"/>
        <dbReference type="EC" id="5.3.1.17"/>
    </reaction>
</comment>
<comment type="cofactor">
    <cofactor evidence="1">
        <name>Zn(2+)</name>
        <dbReference type="ChEBI" id="CHEBI:29105"/>
    </cofactor>
    <text evidence="1">Binds 1 zinc ion per subunit.</text>
</comment>
<comment type="pathway">
    <text evidence="1">Glycan metabolism; pectin degradation; 2-dehydro-3-deoxy-D-gluconate from pectin: step 4/5.</text>
</comment>
<comment type="similarity">
    <text evidence="1">Belongs to the KduI family.</text>
</comment>
<keyword id="KW-0413">Isomerase</keyword>
<keyword id="KW-0479">Metal-binding</keyword>
<keyword id="KW-0862">Zinc</keyword>